<name>LPXK_BURPS</name>
<organism>
    <name type="scientific">Burkholderia pseudomallei (strain K96243)</name>
    <dbReference type="NCBI Taxonomy" id="272560"/>
    <lineage>
        <taxon>Bacteria</taxon>
        <taxon>Pseudomonadati</taxon>
        <taxon>Pseudomonadota</taxon>
        <taxon>Betaproteobacteria</taxon>
        <taxon>Burkholderiales</taxon>
        <taxon>Burkholderiaceae</taxon>
        <taxon>Burkholderia</taxon>
        <taxon>pseudomallei group</taxon>
    </lineage>
</organism>
<reference key="1">
    <citation type="journal article" date="2004" name="Proc. Natl. Acad. Sci. U.S.A.">
        <title>Genomic plasticity of the causative agent of melioidosis, Burkholderia pseudomallei.</title>
        <authorList>
            <person name="Holden M.T.G."/>
            <person name="Titball R.W."/>
            <person name="Peacock S.J."/>
            <person name="Cerdeno-Tarraga A.-M."/>
            <person name="Atkins T."/>
            <person name="Crossman L.C."/>
            <person name="Pitt T."/>
            <person name="Churcher C."/>
            <person name="Mungall K.L."/>
            <person name="Bentley S.D."/>
            <person name="Sebaihia M."/>
            <person name="Thomson N.R."/>
            <person name="Bason N."/>
            <person name="Beacham I.R."/>
            <person name="Brooks K."/>
            <person name="Brown K.A."/>
            <person name="Brown N.F."/>
            <person name="Challis G.L."/>
            <person name="Cherevach I."/>
            <person name="Chillingworth T."/>
            <person name="Cronin A."/>
            <person name="Crossett B."/>
            <person name="Davis P."/>
            <person name="DeShazer D."/>
            <person name="Feltwell T."/>
            <person name="Fraser A."/>
            <person name="Hance Z."/>
            <person name="Hauser H."/>
            <person name="Holroyd S."/>
            <person name="Jagels K."/>
            <person name="Keith K.E."/>
            <person name="Maddison M."/>
            <person name="Moule S."/>
            <person name="Price C."/>
            <person name="Quail M.A."/>
            <person name="Rabbinowitsch E."/>
            <person name="Rutherford K."/>
            <person name="Sanders M."/>
            <person name="Simmonds M."/>
            <person name="Songsivilai S."/>
            <person name="Stevens K."/>
            <person name="Tumapa S."/>
            <person name="Vesaratchavest M."/>
            <person name="Whitehead S."/>
            <person name="Yeats C."/>
            <person name="Barrell B.G."/>
            <person name="Oyston P.C.F."/>
            <person name="Parkhill J."/>
        </authorList>
    </citation>
    <scope>NUCLEOTIDE SEQUENCE [LARGE SCALE GENOMIC DNA]</scope>
    <source>
        <strain>K96243</strain>
    </source>
</reference>
<comment type="function">
    <text evidence="1">Transfers the gamma-phosphate of ATP to the 4'-position of a tetraacyldisaccharide 1-phosphate intermediate (termed DS-1-P) to form tetraacyldisaccharide 1,4'-bis-phosphate (lipid IVA).</text>
</comment>
<comment type="catalytic activity">
    <reaction evidence="1">
        <text>a lipid A disaccharide + ATP = a lipid IVA + ADP + H(+)</text>
        <dbReference type="Rhea" id="RHEA:67840"/>
        <dbReference type="ChEBI" id="CHEBI:15378"/>
        <dbReference type="ChEBI" id="CHEBI:30616"/>
        <dbReference type="ChEBI" id="CHEBI:176343"/>
        <dbReference type="ChEBI" id="CHEBI:176425"/>
        <dbReference type="ChEBI" id="CHEBI:456216"/>
        <dbReference type="EC" id="2.7.1.130"/>
    </reaction>
</comment>
<comment type="pathway">
    <text evidence="1">Glycolipid biosynthesis; lipid IV(A) biosynthesis; lipid IV(A) from (3R)-3-hydroxytetradecanoyl-[acyl-carrier-protein] and UDP-N-acetyl-alpha-D-glucosamine: step 6/6.</text>
</comment>
<comment type="similarity">
    <text evidence="1">Belongs to the LpxK family.</text>
</comment>
<gene>
    <name evidence="1" type="primary">lpxK</name>
    <name type="ordered locus">BPSL0878</name>
</gene>
<dbReference type="EC" id="2.7.1.130" evidence="1"/>
<dbReference type="EMBL" id="BX571965">
    <property type="protein sequence ID" value="CAH34870.1"/>
    <property type="molecule type" value="Genomic_DNA"/>
</dbReference>
<dbReference type="RefSeq" id="WP_004555967.1">
    <property type="nucleotide sequence ID" value="NZ_CP009538.1"/>
</dbReference>
<dbReference type="RefSeq" id="YP_107503.1">
    <property type="nucleotide sequence ID" value="NC_006350.1"/>
</dbReference>
<dbReference type="SMR" id="Q63WL3"/>
<dbReference type="STRING" id="272560.BPSL0878"/>
<dbReference type="GeneID" id="92979967"/>
<dbReference type="KEGG" id="bps:BPSL0878"/>
<dbReference type="PATRIC" id="fig|272560.51.peg.718"/>
<dbReference type="eggNOG" id="COG1663">
    <property type="taxonomic scope" value="Bacteria"/>
</dbReference>
<dbReference type="UniPathway" id="UPA00359">
    <property type="reaction ID" value="UER00482"/>
</dbReference>
<dbReference type="Proteomes" id="UP000000605">
    <property type="component" value="Chromosome 1"/>
</dbReference>
<dbReference type="GO" id="GO:0005886">
    <property type="term" value="C:plasma membrane"/>
    <property type="evidence" value="ECO:0007669"/>
    <property type="project" value="TreeGrafter"/>
</dbReference>
<dbReference type="GO" id="GO:0005524">
    <property type="term" value="F:ATP binding"/>
    <property type="evidence" value="ECO:0007669"/>
    <property type="project" value="UniProtKB-UniRule"/>
</dbReference>
<dbReference type="GO" id="GO:0009029">
    <property type="term" value="F:tetraacyldisaccharide 4'-kinase activity"/>
    <property type="evidence" value="ECO:0007669"/>
    <property type="project" value="UniProtKB-UniRule"/>
</dbReference>
<dbReference type="GO" id="GO:0009245">
    <property type="term" value="P:lipid A biosynthetic process"/>
    <property type="evidence" value="ECO:0007669"/>
    <property type="project" value="UniProtKB-UniRule"/>
</dbReference>
<dbReference type="GO" id="GO:0009244">
    <property type="term" value="P:lipopolysaccharide core region biosynthetic process"/>
    <property type="evidence" value="ECO:0007669"/>
    <property type="project" value="TreeGrafter"/>
</dbReference>
<dbReference type="HAMAP" id="MF_00409">
    <property type="entry name" value="LpxK"/>
    <property type="match status" value="1"/>
</dbReference>
<dbReference type="InterPro" id="IPR003758">
    <property type="entry name" value="LpxK"/>
</dbReference>
<dbReference type="InterPro" id="IPR027417">
    <property type="entry name" value="P-loop_NTPase"/>
</dbReference>
<dbReference type="NCBIfam" id="TIGR00682">
    <property type="entry name" value="lpxK"/>
    <property type="match status" value="1"/>
</dbReference>
<dbReference type="PANTHER" id="PTHR42724">
    <property type="entry name" value="TETRAACYLDISACCHARIDE 4'-KINASE"/>
    <property type="match status" value="1"/>
</dbReference>
<dbReference type="PANTHER" id="PTHR42724:SF1">
    <property type="entry name" value="TETRAACYLDISACCHARIDE 4'-KINASE, MITOCHONDRIAL-RELATED"/>
    <property type="match status" value="1"/>
</dbReference>
<dbReference type="Pfam" id="PF02606">
    <property type="entry name" value="LpxK"/>
    <property type="match status" value="1"/>
</dbReference>
<dbReference type="SUPFAM" id="SSF52540">
    <property type="entry name" value="P-loop containing nucleoside triphosphate hydrolases"/>
    <property type="match status" value="1"/>
</dbReference>
<keyword id="KW-0067">ATP-binding</keyword>
<keyword id="KW-0418">Kinase</keyword>
<keyword id="KW-0441">Lipid A biosynthesis</keyword>
<keyword id="KW-0444">Lipid biosynthesis</keyword>
<keyword id="KW-0443">Lipid metabolism</keyword>
<keyword id="KW-0547">Nucleotide-binding</keyword>
<keyword id="KW-1185">Reference proteome</keyword>
<keyword id="KW-0808">Transferase</keyword>
<proteinExistence type="inferred from homology"/>
<feature type="chain" id="PRO_0000229947" description="Tetraacyldisaccharide 4'-kinase">
    <location>
        <begin position="1"/>
        <end position="342"/>
    </location>
</feature>
<feature type="binding site" evidence="1">
    <location>
        <begin position="68"/>
        <end position="75"/>
    </location>
    <ligand>
        <name>ATP</name>
        <dbReference type="ChEBI" id="CHEBI:30616"/>
    </ligand>
</feature>
<protein>
    <recommendedName>
        <fullName evidence="1">Tetraacyldisaccharide 4'-kinase</fullName>
        <ecNumber evidence="1">2.7.1.130</ecNumber>
    </recommendedName>
    <alternativeName>
        <fullName evidence="1">Lipid A 4'-kinase</fullName>
    </alternativeName>
</protein>
<accession>Q63WL3</accession>
<evidence type="ECO:0000255" key="1">
    <source>
        <dbReference type="HAMAP-Rule" id="MF_00409"/>
    </source>
</evidence>
<sequence>MSARPGLLARAEARLTREWQRRGALAWALAPFACAFGAIAALRRAAYARGWKARVDCGVPVVVVGNVTVGGTGKTPTVIALVDALRAAGFTPGVVSRGYGAKIAAPTAVTAASPPQQAGDEPLLIARRTLAPVWVCPDRVAAVRALKAAHPEVDVVVSDDGLQHYRLARAVEIVVFDHRLGGNGFLLPAGPLREPLSRRRDATLVNDPYSRALPPWPDTFALSLAPGDAWHLDRPSRRKPLAQFAGERVLAAAGIGAPERFFATLRAAGVAPATRALPDHYAFATNPFVDDHFDAILITEKDAVKLGTSWRDARIWVVPVEAALDPRLIALVVEKLRGRTSA</sequence>